<accession>D3YZG8</accession>
<feature type="chain" id="PRO_0000413328" description="Bifunctional methylenetetrahydrofolate dehydrogenase/cyclohydrolase 2, mitochondrial">
    <location>
        <begin position="1"/>
        <end position="338"/>
    </location>
</feature>
<feature type="binding site" evidence="2">
    <location>
        <begin position="89"/>
        <end position="93"/>
    </location>
    <ligand>
        <name>substrate</name>
    </ligand>
</feature>
<feature type="binding site" evidence="2">
    <location>
        <begin position="136"/>
        <end position="138"/>
    </location>
    <ligand>
        <name>substrate</name>
    </ligand>
</feature>
<feature type="binding site" evidence="2">
    <location>
        <begin position="205"/>
        <end position="207"/>
    </location>
    <ligand>
        <name>NAD(+)</name>
        <dbReference type="ChEBI" id="CHEBI:57540"/>
    </ligand>
</feature>
<feature type="binding site" evidence="2">
    <location>
        <position position="238"/>
    </location>
    <ligand>
        <name>NAD(+)</name>
        <dbReference type="ChEBI" id="CHEBI:57540"/>
    </ligand>
</feature>
<feature type="binding site" evidence="2">
    <location>
        <begin position="314"/>
        <end position="318"/>
    </location>
    <ligand>
        <name>substrate</name>
    </ligand>
</feature>
<keyword id="KW-0028">Amino-acid biosynthesis</keyword>
<keyword id="KW-0368">Histidine biosynthesis</keyword>
<keyword id="KW-0378">Hydrolase</keyword>
<keyword id="KW-0460">Magnesium</keyword>
<keyword id="KW-0472">Membrane</keyword>
<keyword id="KW-0486">Methionine biosynthesis</keyword>
<keyword id="KW-0496">Mitochondrion</keyword>
<keyword id="KW-0999">Mitochondrion inner membrane</keyword>
<keyword id="KW-0511">Multifunctional enzyme</keyword>
<keyword id="KW-0520">NAD</keyword>
<keyword id="KW-0554">One-carbon metabolism</keyword>
<keyword id="KW-0560">Oxidoreductase</keyword>
<keyword id="KW-0658">Purine biosynthesis</keyword>
<keyword id="KW-1185">Reference proteome</keyword>
<comment type="function">
    <text evidence="1">Bifunctional mitochondrial folate-interconverting enzyme that has both NAD/NADP-dependent methylenetetrahydrofolate dehydrogenase and methenyltetrahydrofolate cyclohydrolase activities.</text>
</comment>
<comment type="catalytic activity">
    <reaction evidence="1">
        <text>(6R)-5,10-methylene-5,6,7,8-tetrahydrofolate + NAD(+) = (6R)-5,10-methenyltetrahydrofolate + NADH</text>
        <dbReference type="Rhea" id="RHEA:22892"/>
        <dbReference type="ChEBI" id="CHEBI:15636"/>
        <dbReference type="ChEBI" id="CHEBI:57455"/>
        <dbReference type="ChEBI" id="CHEBI:57540"/>
        <dbReference type="ChEBI" id="CHEBI:57945"/>
        <dbReference type="EC" id="1.5.1.15"/>
    </reaction>
</comment>
<comment type="catalytic activity">
    <reaction evidence="1">
        <text>(6R)-5,10-methenyltetrahydrofolate + H2O = (6R)-10-formyltetrahydrofolate + H(+)</text>
        <dbReference type="Rhea" id="RHEA:23700"/>
        <dbReference type="ChEBI" id="CHEBI:15377"/>
        <dbReference type="ChEBI" id="CHEBI:15378"/>
        <dbReference type="ChEBI" id="CHEBI:57455"/>
        <dbReference type="ChEBI" id="CHEBI:195366"/>
        <dbReference type="EC" id="3.5.4.9"/>
    </reaction>
</comment>
<comment type="catalytic activity">
    <reaction evidence="1">
        <text>(6R)-5,10-methylene-5,6,7,8-tetrahydrofolate + NADP(+) = (6R)-5,10-methenyltetrahydrofolate + NADPH</text>
        <dbReference type="Rhea" id="RHEA:22812"/>
        <dbReference type="ChEBI" id="CHEBI:15636"/>
        <dbReference type="ChEBI" id="CHEBI:57455"/>
        <dbReference type="ChEBI" id="CHEBI:57783"/>
        <dbReference type="ChEBI" id="CHEBI:58349"/>
        <dbReference type="EC" id="1.5.1.5"/>
    </reaction>
</comment>
<comment type="cofactor">
    <cofactor evidence="1">
        <name>Mg(2+)</name>
        <dbReference type="ChEBI" id="CHEBI:18420"/>
    </cofactor>
</comment>
<comment type="pathway">
    <text evidence="1">One-carbon metabolism; tetrahydrofolate interconversion.</text>
</comment>
<comment type="subcellular location">
    <subcellularLocation>
        <location evidence="1">Mitochondrion inner membrane</location>
        <topology evidence="1">Peripheral membrane protein</topology>
        <orientation evidence="1">Matrix side</orientation>
    </subcellularLocation>
</comment>
<comment type="tissue specificity">
    <text evidence="3">Widely expressed.</text>
</comment>
<comment type="developmental stage">
    <text evidence="3">Expressed at all embryonic days examined in the neural tube and the forebrain, midbrain, and hindbrain. Also detected in the branchial arches and limb buds, particularly along the progress zone. Expression is low at 8.5 dpc but increases at 10.5 dpc.</text>
</comment>
<comment type="similarity">
    <text evidence="5">Belongs to the tetrahydrofolate dehydrogenase/cyclohydrolase family.</text>
</comment>
<protein>
    <recommendedName>
        <fullName evidence="1">Bifunctional methylenetetrahydrofolate dehydrogenase/cyclohydrolase 2, mitochondrial</fullName>
    </recommendedName>
    <alternativeName>
        <fullName evidence="6">NADP-dependent methylenetetrahydrofolate dehydrogenase 2-like protein</fullName>
        <shortName evidence="4">MTHFD2-like</shortName>
    </alternativeName>
    <domain>
        <recommendedName>
            <fullName evidence="1">NAD-dependent methylenetetrahydrofolate dehydrogenase</fullName>
            <ecNumber evidence="1">1.5.1.15</ecNumber>
            <ecNumber evidence="1">1.5.1.5</ecNumber>
        </recommendedName>
    </domain>
    <domain>
        <recommendedName>
            <fullName evidence="1">Methenyltetrahydrofolate cyclohydrolase</fullName>
            <ecNumber evidence="1">3.5.4.9</ecNumber>
        </recommendedName>
    </domain>
</protein>
<reference key="1">
    <citation type="journal article" date="2009" name="PLoS Biol.">
        <title>Lineage-specific biology revealed by a finished genome assembly of the mouse.</title>
        <authorList>
            <person name="Church D.M."/>
            <person name="Goodstadt L."/>
            <person name="Hillier L.W."/>
            <person name="Zody M.C."/>
            <person name="Goldstein S."/>
            <person name="She X."/>
            <person name="Bult C.J."/>
            <person name="Agarwala R."/>
            <person name="Cherry J.L."/>
            <person name="DiCuccio M."/>
            <person name="Hlavina W."/>
            <person name="Kapustin Y."/>
            <person name="Meric P."/>
            <person name="Maglott D."/>
            <person name="Birtle Z."/>
            <person name="Marques A.C."/>
            <person name="Graves T."/>
            <person name="Zhou S."/>
            <person name="Teague B."/>
            <person name="Potamousis K."/>
            <person name="Churas C."/>
            <person name="Place M."/>
            <person name="Herschleb J."/>
            <person name="Runnheim R."/>
            <person name="Forrest D."/>
            <person name="Amos-Landgraf J."/>
            <person name="Schwartz D.C."/>
            <person name="Cheng Z."/>
            <person name="Lindblad-Toh K."/>
            <person name="Eichler E.E."/>
            <person name="Ponting C.P."/>
        </authorList>
    </citation>
    <scope>NUCLEOTIDE SEQUENCE [LARGE SCALE GENOMIC DNA]</scope>
    <source>
        <strain>C57BL/6J</strain>
    </source>
</reference>
<reference key="2">
    <citation type="submission" date="2005-09" db="EMBL/GenBank/DDBJ databases">
        <authorList>
            <person name="Mural R.J."/>
            <person name="Adams M.D."/>
            <person name="Myers E.W."/>
            <person name="Smith H.O."/>
            <person name="Venter J.C."/>
        </authorList>
    </citation>
    <scope>NUCLEOTIDE SEQUENCE [LARGE SCALE GENOMIC DNA]</scope>
</reference>
<reference key="3">
    <citation type="journal article" date="2014" name="J. Biol. Chem.">
        <title>Mitochondrial MTHFD2L is a dual redox cofactor-specific methylenetetrahydrofolate dehydrogenase/methenyltetrahydrofolate cyclohydrolase expressed in both adult and embryonic tissues.</title>
        <authorList>
            <person name="Shin M."/>
            <person name="Bryant J.D."/>
            <person name="Momb J."/>
            <person name="Appling D.R."/>
        </authorList>
    </citation>
    <scope>TISSUE SPECIFICITY</scope>
    <scope>DEVELOPMENTAL STAGE</scope>
</reference>
<organism>
    <name type="scientific">Mus musculus</name>
    <name type="common">Mouse</name>
    <dbReference type="NCBI Taxonomy" id="10090"/>
    <lineage>
        <taxon>Eukaryota</taxon>
        <taxon>Metazoa</taxon>
        <taxon>Chordata</taxon>
        <taxon>Craniata</taxon>
        <taxon>Vertebrata</taxon>
        <taxon>Euteleostomi</taxon>
        <taxon>Mammalia</taxon>
        <taxon>Eutheria</taxon>
        <taxon>Euarchontoglires</taxon>
        <taxon>Glires</taxon>
        <taxon>Rodentia</taxon>
        <taxon>Myomorpha</taxon>
        <taxon>Muroidea</taxon>
        <taxon>Muridae</taxon>
        <taxon>Murinae</taxon>
        <taxon>Mus</taxon>
        <taxon>Mus</taxon>
    </lineage>
</organism>
<gene>
    <name evidence="7" type="primary">Mthfd2l</name>
</gene>
<name>MTD2L_MOUSE</name>
<sequence>MATRARGFSLLRGRLGRGPVRAPGVAERAWRGFGSSGRRHEAVIISGTNMAKQIQKEIQQGVESWIALGNRRPHLSIILVGDNPASHTYVRNKIKAASAVGICSELIIKPKNVSQEELLDITDQLNMDPRVSGILVQLPLPDHVDERTICNGIAPEKDVDGFHIINIGRLCLDQHSLIPATASAVWEIIKRAGIETFGKNVVVAGRSKNVGMPIAMLLHTDGEHERPGGDATVTIAHRYTPREQLKAHTQLADIIIVAAGIPRLITADMVREGAAVIDVGINYIQDPVTGKTKLVGDVDFEAVKKKASFITPVPGGVGPMTVAMLLKNTLLAAKNIAY</sequence>
<proteinExistence type="evidence at transcript level"/>
<dbReference type="EC" id="1.5.1.15" evidence="1"/>
<dbReference type="EC" id="1.5.1.5" evidence="1"/>
<dbReference type="EC" id="3.5.4.9" evidence="1"/>
<dbReference type="EMBL" id="AC109311">
    <property type="status" value="NOT_ANNOTATED_CDS"/>
    <property type="molecule type" value="Genomic_DNA"/>
</dbReference>
<dbReference type="EMBL" id="AC157938">
    <property type="status" value="NOT_ANNOTATED_CDS"/>
    <property type="molecule type" value="Genomic_DNA"/>
</dbReference>
<dbReference type="EMBL" id="CH466617">
    <property type="protein sequence ID" value="EDL05299.1"/>
    <property type="molecule type" value="Genomic_DNA"/>
</dbReference>
<dbReference type="CCDS" id="CCDS39145.1"/>
<dbReference type="RefSeq" id="NP_081064.1">
    <property type="nucleotide sequence ID" value="NM_026788.1"/>
</dbReference>
<dbReference type="SMR" id="D3YZG8"/>
<dbReference type="BioGRID" id="577420">
    <property type="interactions" value="2"/>
</dbReference>
<dbReference type="FunCoup" id="D3YZG8">
    <property type="interactions" value="2292"/>
</dbReference>
<dbReference type="STRING" id="10090.ENSMUSP00000071578"/>
<dbReference type="PhosphoSitePlus" id="D3YZG8"/>
<dbReference type="PaxDb" id="10090-ENSMUSP00000071578"/>
<dbReference type="PeptideAtlas" id="D3YZG8"/>
<dbReference type="ProteomicsDB" id="291429"/>
<dbReference type="Antibodypedia" id="24601">
    <property type="antibodies" value="140 antibodies from 25 providers"/>
</dbReference>
<dbReference type="Ensembl" id="ENSMUST00000071652.6">
    <property type="protein sequence ID" value="ENSMUSP00000071578.5"/>
    <property type="gene ID" value="ENSMUSG00000029376.9"/>
</dbReference>
<dbReference type="GeneID" id="665563"/>
<dbReference type="KEGG" id="mmu:665563"/>
<dbReference type="UCSC" id="uc008ybp.2">
    <property type="organism name" value="mouse"/>
</dbReference>
<dbReference type="AGR" id="MGI:1915871"/>
<dbReference type="CTD" id="441024"/>
<dbReference type="MGI" id="MGI:1915871">
    <property type="gene designation" value="Mthfd2l"/>
</dbReference>
<dbReference type="VEuPathDB" id="HostDB:ENSMUSG00000029376"/>
<dbReference type="eggNOG" id="KOG0089">
    <property type="taxonomic scope" value="Eukaryota"/>
</dbReference>
<dbReference type="GeneTree" id="ENSGT00940000160901"/>
<dbReference type="HOGENOM" id="CLU_034045_0_1_1"/>
<dbReference type="InParanoid" id="D3YZG8"/>
<dbReference type="OMA" id="YGCMKML"/>
<dbReference type="PhylomeDB" id="D3YZG8"/>
<dbReference type="TreeFam" id="TF323998"/>
<dbReference type="BRENDA" id="1.5.1.5">
    <property type="organism ID" value="3474"/>
</dbReference>
<dbReference type="Reactome" id="R-MMU-196757">
    <property type="pathway name" value="Metabolism of folate and pterines"/>
</dbReference>
<dbReference type="UniPathway" id="UPA00193"/>
<dbReference type="BioGRID-ORCS" id="665563">
    <property type="hits" value="0 hits in 76 CRISPR screens"/>
</dbReference>
<dbReference type="ChiTaRS" id="Mthfd2l">
    <property type="organism name" value="mouse"/>
</dbReference>
<dbReference type="PRO" id="PR:D3YZG8"/>
<dbReference type="Proteomes" id="UP000000589">
    <property type="component" value="Chromosome 5"/>
</dbReference>
<dbReference type="RNAct" id="D3YZG8">
    <property type="molecule type" value="protein"/>
</dbReference>
<dbReference type="Bgee" id="ENSMUSG00000029376">
    <property type="expression patterns" value="Expressed in ventricular zone and 217 other cell types or tissues"/>
</dbReference>
<dbReference type="ExpressionAtlas" id="D3YZG8">
    <property type="expression patterns" value="baseline and differential"/>
</dbReference>
<dbReference type="GO" id="GO:0005743">
    <property type="term" value="C:mitochondrial inner membrane"/>
    <property type="evidence" value="ECO:0007669"/>
    <property type="project" value="UniProtKB-SubCell"/>
</dbReference>
<dbReference type="GO" id="GO:0005759">
    <property type="term" value="C:mitochondrial matrix"/>
    <property type="evidence" value="ECO:0000266"/>
    <property type="project" value="MGI"/>
</dbReference>
<dbReference type="GO" id="GO:0004477">
    <property type="term" value="F:methenyltetrahydrofolate cyclohydrolase activity"/>
    <property type="evidence" value="ECO:0000250"/>
    <property type="project" value="UniProtKB"/>
</dbReference>
<dbReference type="GO" id="GO:0004487">
    <property type="term" value="F:methylenetetrahydrofolate dehydrogenase (NAD+) activity"/>
    <property type="evidence" value="ECO:0000250"/>
    <property type="project" value="UniProtKB"/>
</dbReference>
<dbReference type="GO" id="GO:0004488">
    <property type="term" value="F:methylenetetrahydrofolate dehydrogenase (NADP+) activity"/>
    <property type="evidence" value="ECO:0000250"/>
    <property type="project" value="UniProtKB"/>
</dbReference>
<dbReference type="GO" id="GO:0009256">
    <property type="term" value="P:10-formyltetrahydrofolate metabolic process"/>
    <property type="evidence" value="ECO:0007669"/>
    <property type="project" value="Ensembl"/>
</dbReference>
<dbReference type="GO" id="GO:0000105">
    <property type="term" value="P:L-histidine biosynthetic process"/>
    <property type="evidence" value="ECO:0007669"/>
    <property type="project" value="UniProtKB-KW"/>
</dbReference>
<dbReference type="GO" id="GO:0009086">
    <property type="term" value="P:methionine biosynthetic process"/>
    <property type="evidence" value="ECO:0007669"/>
    <property type="project" value="UniProtKB-KW"/>
</dbReference>
<dbReference type="GO" id="GO:0006164">
    <property type="term" value="P:purine nucleotide biosynthetic process"/>
    <property type="evidence" value="ECO:0007669"/>
    <property type="project" value="UniProtKB-KW"/>
</dbReference>
<dbReference type="GO" id="GO:0035999">
    <property type="term" value="P:tetrahydrofolate interconversion"/>
    <property type="evidence" value="ECO:0000250"/>
    <property type="project" value="UniProtKB"/>
</dbReference>
<dbReference type="CDD" id="cd01080">
    <property type="entry name" value="NAD_bind_m-THF_DH_Cyclohyd"/>
    <property type="match status" value="1"/>
</dbReference>
<dbReference type="FunFam" id="3.40.50.10860:FF:000001">
    <property type="entry name" value="Bifunctional protein FolD"/>
    <property type="match status" value="1"/>
</dbReference>
<dbReference type="FunFam" id="3.40.50.720:FF:000070">
    <property type="entry name" value="probable bifunctional methylenetetrahydrofolate dehydrogenase/cyclohydrolase 2"/>
    <property type="match status" value="1"/>
</dbReference>
<dbReference type="Gene3D" id="3.40.50.10860">
    <property type="entry name" value="Leucine Dehydrogenase, chain A, domain 1"/>
    <property type="match status" value="1"/>
</dbReference>
<dbReference type="Gene3D" id="3.40.50.720">
    <property type="entry name" value="NAD(P)-binding Rossmann-like Domain"/>
    <property type="match status" value="1"/>
</dbReference>
<dbReference type="HAMAP" id="MF_01576">
    <property type="entry name" value="THF_DHG_CYH"/>
    <property type="match status" value="1"/>
</dbReference>
<dbReference type="InterPro" id="IPR046346">
    <property type="entry name" value="Aminoacid_DH-like_N_sf"/>
</dbReference>
<dbReference type="InterPro" id="IPR036291">
    <property type="entry name" value="NAD(P)-bd_dom_sf"/>
</dbReference>
<dbReference type="InterPro" id="IPR000672">
    <property type="entry name" value="THF_DH/CycHdrlase"/>
</dbReference>
<dbReference type="InterPro" id="IPR020630">
    <property type="entry name" value="THF_DH/CycHdrlase_cat_dom"/>
</dbReference>
<dbReference type="InterPro" id="IPR020867">
    <property type="entry name" value="THF_DH/CycHdrlase_CS"/>
</dbReference>
<dbReference type="InterPro" id="IPR020631">
    <property type="entry name" value="THF_DH/CycHdrlase_NAD-bd_dom"/>
</dbReference>
<dbReference type="PANTHER" id="PTHR48099:SF7">
    <property type="entry name" value="BIFUNCTIONAL METHYLENETETRAHYDROFOLATE DEHYDROGENASE_CYCLOHYDROLASE 2, MITOCHONDRIAL"/>
    <property type="match status" value="1"/>
</dbReference>
<dbReference type="PANTHER" id="PTHR48099">
    <property type="entry name" value="C-1-TETRAHYDROFOLATE SYNTHASE, CYTOPLASMIC-RELATED"/>
    <property type="match status" value="1"/>
</dbReference>
<dbReference type="Pfam" id="PF00763">
    <property type="entry name" value="THF_DHG_CYH"/>
    <property type="match status" value="1"/>
</dbReference>
<dbReference type="Pfam" id="PF02882">
    <property type="entry name" value="THF_DHG_CYH_C"/>
    <property type="match status" value="1"/>
</dbReference>
<dbReference type="PRINTS" id="PR00085">
    <property type="entry name" value="THFDHDRGNASE"/>
</dbReference>
<dbReference type="SUPFAM" id="SSF53223">
    <property type="entry name" value="Aminoacid dehydrogenase-like, N-terminal domain"/>
    <property type="match status" value="1"/>
</dbReference>
<dbReference type="SUPFAM" id="SSF51735">
    <property type="entry name" value="NAD(P)-binding Rossmann-fold domains"/>
    <property type="match status" value="1"/>
</dbReference>
<dbReference type="PROSITE" id="PS00767">
    <property type="entry name" value="THF_DHG_CYH_2"/>
    <property type="match status" value="1"/>
</dbReference>
<evidence type="ECO:0000250" key="1">
    <source>
        <dbReference type="UniProtKB" id="D3ZUA0"/>
    </source>
</evidence>
<evidence type="ECO:0000250" key="2">
    <source>
        <dbReference type="UniProtKB" id="P13995"/>
    </source>
</evidence>
<evidence type="ECO:0000269" key="3">
    <source>
    </source>
</evidence>
<evidence type="ECO:0000303" key="4">
    <source>
    </source>
</evidence>
<evidence type="ECO:0000305" key="5"/>
<evidence type="ECO:0000305" key="6">
    <source>
    </source>
</evidence>
<evidence type="ECO:0000312" key="7">
    <source>
        <dbReference type="MGI" id="MGI:1915871"/>
    </source>
</evidence>